<sequence>MDLDMNGGNKRVFQRLGGGSNRPTTDSNQKVCFHWRAGRCNRYPCPYLHRELPGPGSGPVAASSNKRVADESGFAGPSHRRGPGFSGTANNWGRFGGNRTVTKTEKLCKFWVDGNCPYGDKCRYLHCWSKGDSFSLLTQLDGHQKVVTGIALPSGSDKLYTASKDETVRIWDCASGQCTGVLNLGGEVGCIISEGPWLLVGMPNLVKAWNIQNNADLSLNGPVGQVYSLVVGTDLLFAGTQDGSILVWRYNSTTSCFDPAASLLGHTLAVVSLYVGANRLYSGAMDNSIKVWSLDNLQCIQTLTEHTSVVMSLICWDQFLLSCSLDNTVKIWAATEGGNLEVTYTHKEEYGVLALCGVHDAEAKPVLLCSCNDNSLHLYDLPSFTERGKILAKQEIRSIQIGPGGIFFTGDGSGQVKVWKWSTESTPILS</sequence>
<proteinExistence type="evidence at transcript level"/>
<keyword id="KW-0238">DNA-binding</keyword>
<keyword id="KW-0479">Metal-binding</keyword>
<keyword id="KW-1185">Reference proteome</keyword>
<keyword id="KW-0677">Repeat</keyword>
<keyword id="KW-0853">WD repeat</keyword>
<keyword id="KW-0862">Zinc</keyword>
<keyword id="KW-0863">Zinc-finger</keyword>
<feature type="chain" id="PRO_0000372002" description="Zinc finger CCCH domain-containing protein 48">
    <location>
        <begin position="1"/>
        <end position="430"/>
    </location>
</feature>
<feature type="repeat" description="WD 1">
    <location>
        <begin position="142"/>
        <end position="183"/>
    </location>
</feature>
<feature type="repeat" description="WD 2">
    <location>
        <begin position="221"/>
        <end position="258"/>
    </location>
</feature>
<feature type="repeat" description="WD 3">
    <location>
        <begin position="265"/>
        <end position="304"/>
    </location>
</feature>
<feature type="repeat" description="WD 4">
    <location>
        <begin position="306"/>
        <end position="342"/>
    </location>
</feature>
<feature type="repeat" description="WD 5">
    <location>
        <begin position="345"/>
        <end position="389"/>
    </location>
</feature>
<feature type="repeat" description="WD 6">
    <location>
        <begin position="391"/>
        <end position="429"/>
    </location>
</feature>
<feature type="zinc finger region" description="C3H1-type 1" evidence="1">
    <location>
        <begin position="26"/>
        <end position="52"/>
    </location>
</feature>
<feature type="zinc finger region" description="C3H1-type 2" evidence="1">
    <location>
        <begin position="102"/>
        <end position="129"/>
    </location>
</feature>
<feature type="region of interest" description="Disordered" evidence="2">
    <location>
        <begin position="1"/>
        <end position="27"/>
    </location>
</feature>
<feature type="region of interest" description="Disordered" evidence="2">
    <location>
        <begin position="56"/>
        <end position="90"/>
    </location>
</feature>
<accession>Q9FNZ2</accession>
<protein>
    <recommendedName>
        <fullName>Zinc finger CCCH domain-containing protein 48</fullName>
        <shortName>AtC3H48</shortName>
    </recommendedName>
    <alternativeName>
        <fullName>Zinc finger CCCH domain and WD40 repeat-containing protein 1</fullName>
    </alternativeName>
</protein>
<gene>
    <name type="primary">ZFWD1</name>
    <name type="ordered locus">At4g25440</name>
    <name type="ORF">T30C3.6</name>
</gene>
<organism>
    <name type="scientific">Arabidopsis thaliana</name>
    <name type="common">Mouse-ear cress</name>
    <dbReference type="NCBI Taxonomy" id="3702"/>
    <lineage>
        <taxon>Eukaryota</taxon>
        <taxon>Viridiplantae</taxon>
        <taxon>Streptophyta</taxon>
        <taxon>Embryophyta</taxon>
        <taxon>Tracheophyta</taxon>
        <taxon>Spermatophyta</taxon>
        <taxon>Magnoliopsida</taxon>
        <taxon>eudicotyledons</taxon>
        <taxon>Gunneridae</taxon>
        <taxon>Pentapetalae</taxon>
        <taxon>rosids</taxon>
        <taxon>malvids</taxon>
        <taxon>Brassicales</taxon>
        <taxon>Brassicaceae</taxon>
        <taxon>Camelineae</taxon>
        <taxon>Arabidopsis</taxon>
    </lineage>
</organism>
<dbReference type="EMBL" id="AJ252063">
    <property type="protein sequence ID" value="CAC19847.1"/>
    <property type="molecule type" value="mRNA"/>
</dbReference>
<dbReference type="EMBL" id="AL079350">
    <property type="status" value="NOT_ANNOTATED_CDS"/>
    <property type="molecule type" value="Genomic_DNA"/>
</dbReference>
<dbReference type="EMBL" id="CP002687">
    <property type="protein sequence ID" value="AEE85060.1"/>
    <property type="molecule type" value="Genomic_DNA"/>
</dbReference>
<dbReference type="EMBL" id="CP002687">
    <property type="protein sequence ID" value="ANM67105.1"/>
    <property type="molecule type" value="Genomic_DNA"/>
</dbReference>
<dbReference type="EMBL" id="CP002687">
    <property type="protein sequence ID" value="ANM67106.1"/>
    <property type="molecule type" value="Genomic_DNA"/>
</dbReference>
<dbReference type="EMBL" id="BT026122">
    <property type="protein sequence ID" value="ABG48478.1"/>
    <property type="molecule type" value="mRNA"/>
</dbReference>
<dbReference type="RefSeq" id="NP_001328956.1">
    <property type="nucleotide sequence ID" value="NM_001341743.1"/>
</dbReference>
<dbReference type="RefSeq" id="NP_001328957.1">
    <property type="nucleotide sequence ID" value="NM_001341744.1"/>
</dbReference>
<dbReference type="RefSeq" id="NP_194274.2">
    <property type="nucleotide sequence ID" value="NM_118676.4"/>
</dbReference>
<dbReference type="SMR" id="Q9FNZ2"/>
<dbReference type="BioGRID" id="13936">
    <property type="interactions" value="3"/>
</dbReference>
<dbReference type="FunCoup" id="Q9FNZ2">
    <property type="interactions" value="842"/>
</dbReference>
<dbReference type="IntAct" id="Q9FNZ2">
    <property type="interactions" value="3"/>
</dbReference>
<dbReference type="STRING" id="3702.Q9FNZ2"/>
<dbReference type="PaxDb" id="3702-AT4G25440.1"/>
<dbReference type="ProteomicsDB" id="240484"/>
<dbReference type="EnsemblPlants" id="AT4G25440.1">
    <property type="protein sequence ID" value="AT4G25440.1"/>
    <property type="gene ID" value="AT4G25440"/>
</dbReference>
<dbReference type="EnsemblPlants" id="AT4G25440.2">
    <property type="protein sequence ID" value="AT4G25440.2"/>
    <property type="gene ID" value="AT4G25440"/>
</dbReference>
<dbReference type="EnsemblPlants" id="AT4G25440.3">
    <property type="protein sequence ID" value="AT4G25440.3"/>
    <property type="gene ID" value="AT4G25440"/>
</dbReference>
<dbReference type="GeneID" id="828649"/>
<dbReference type="Gramene" id="AT4G25440.1">
    <property type="protein sequence ID" value="AT4G25440.1"/>
    <property type="gene ID" value="AT4G25440"/>
</dbReference>
<dbReference type="Gramene" id="AT4G25440.2">
    <property type="protein sequence ID" value="AT4G25440.2"/>
    <property type="gene ID" value="AT4G25440"/>
</dbReference>
<dbReference type="Gramene" id="AT4G25440.3">
    <property type="protein sequence ID" value="AT4G25440.3"/>
    <property type="gene ID" value="AT4G25440"/>
</dbReference>
<dbReference type="KEGG" id="ath:AT4G25440"/>
<dbReference type="Araport" id="AT4G25440"/>
<dbReference type="TAIR" id="AT4G25440">
    <property type="gene designation" value="ZFWD1"/>
</dbReference>
<dbReference type="eggNOG" id="KOG0274">
    <property type="taxonomic scope" value="Eukaryota"/>
</dbReference>
<dbReference type="HOGENOM" id="CLU_037680_0_0_1"/>
<dbReference type="InParanoid" id="Q9FNZ2"/>
<dbReference type="OMA" id="MNGGNTR"/>
<dbReference type="PhylomeDB" id="Q9FNZ2"/>
<dbReference type="PRO" id="PR:Q9FNZ2"/>
<dbReference type="Proteomes" id="UP000006548">
    <property type="component" value="Chromosome 4"/>
</dbReference>
<dbReference type="ExpressionAtlas" id="Q9FNZ2">
    <property type="expression patterns" value="baseline and differential"/>
</dbReference>
<dbReference type="GO" id="GO:0003677">
    <property type="term" value="F:DNA binding"/>
    <property type="evidence" value="ECO:0007669"/>
    <property type="project" value="UniProtKB-KW"/>
</dbReference>
<dbReference type="GO" id="GO:0008270">
    <property type="term" value="F:zinc ion binding"/>
    <property type="evidence" value="ECO:0007669"/>
    <property type="project" value="UniProtKB-KW"/>
</dbReference>
<dbReference type="FunFam" id="2.130.10.10:FF:000869">
    <property type="entry name" value="Zinc finger CCCH domain-containing protein 48"/>
    <property type="match status" value="1"/>
</dbReference>
<dbReference type="FunFam" id="2.130.10.10:FF:001235">
    <property type="entry name" value="Zinc finger CCCH domain-containing protein 48"/>
    <property type="match status" value="1"/>
</dbReference>
<dbReference type="Gene3D" id="2.130.10.10">
    <property type="entry name" value="YVTN repeat-like/Quinoprotein amine dehydrogenase"/>
    <property type="match status" value="2"/>
</dbReference>
<dbReference type="Gene3D" id="4.10.1000.10">
    <property type="entry name" value="Zinc finger, CCCH-type"/>
    <property type="match status" value="1"/>
</dbReference>
<dbReference type="InterPro" id="IPR020472">
    <property type="entry name" value="G-protein_beta_WD-40_rep"/>
</dbReference>
<dbReference type="InterPro" id="IPR015943">
    <property type="entry name" value="WD40/YVTN_repeat-like_dom_sf"/>
</dbReference>
<dbReference type="InterPro" id="IPR036322">
    <property type="entry name" value="WD40_repeat_dom_sf"/>
</dbReference>
<dbReference type="InterPro" id="IPR001680">
    <property type="entry name" value="WD40_rpt"/>
</dbReference>
<dbReference type="InterPro" id="IPR044715">
    <property type="entry name" value="WDR86-like"/>
</dbReference>
<dbReference type="InterPro" id="IPR000571">
    <property type="entry name" value="Znf_CCCH"/>
</dbReference>
<dbReference type="InterPro" id="IPR036855">
    <property type="entry name" value="Znf_CCCH_sf"/>
</dbReference>
<dbReference type="PANTHER" id="PTHR44489">
    <property type="match status" value="1"/>
</dbReference>
<dbReference type="PANTHER" id="PTHR44489:SF18">
    <property type="entry name" value="ZINC FINGER CCCH DOMAIN-CONTAINING PROTEIN 48"/>
    <property type="match status" value="1"/>
</dbReference>
<dbReference type="Pfam" id="PF00400">
    <property type="entry name" value="WD40"/>
    <property type="match status" value="3"/>
</dbReference>
<dbReference type="Pfam" id="PF18345">
    <property type="entry name" value="zf_CCCH_4"/>
    <property type="match status" value="1"/>
</dbReference>
<dbReference type="PRINTS" id="PR00320">
    <property type="entry name" value="GPROTEINBRPT"/>
</dbReference>
<dbReference type="SMART" id="SM00320">
    <property type="entry name" value="WD40"/>
    <property type="match status" value="6"/>
</dbReference>
<dbReference type="SMART" id="SM00356">
    <property type="entry name" value="ZnF_C3H1"/>
    <property type="match status" value="2"/>
</dbReference>
<dbReference type="SUPFAM" id="SSF90229">
    <property type="entry name" value="CCCH zinc finger"/>
    <property type="match status" value="1"/>
</dbReference>
<dbReference type="SUPFAM" id="SSF50978">
    <property type="entry name" value="WD40 repeat-like"/>
    <property type="match status" value="1"/>
</dbReference>
<dbReference type="PROSITE" id="PS00678">
    <property type="entry name" value="WD_REPEATS_1"/>
    <property type="match status" value="1"/>
</dbReference>
<dbReference type="PROSITE" id="PS50082">
    <property type="entry name" value="WD_REPEATS_2"/>
    <property type="match status" value="2"/>
</dbReference>
<dbReference type="PROSITE" id="PS50294">
    <property type="entry name" value="WD_REPEATS_REGION"/>
    <property type="match status" value="1"/>
</dbReference>
<dbReference type="PROSITE" id="PS50103">
    <property type="entry name" value="ZF_C3H1"/>
    <property type="match status" value="2"/>
</dbReference>
<name>C3H48_ARATH</name>
<reference key="1">
    <citation type="journal article" date="2000" name="Gene">
        <title>ZFWD: a novel subfamily of plant proteins containing a C3H zinc finger and seven WD40 repeats.</title>
        <authorList>
            <person name="Terol J."/>
            <person name="Bargues M."/>
            <person name="Perez-Alonso M."/>
        </authorList>
    </citation>
    <scope>NUCLEOTIDE SEQUENCE [MRNA]</scope>
    <source>
        <strain>cv. Columbia</strain>
    </source>
</reference>
<reference key="2">
    <citation type="journal article" date="1999" name="Nature">
        <title>Sequence and analysis of chromosome 4 of the plant Arabidopsis thaliana.</title>
        <authorList>
            <person name="Mayer K.F.X."/>
            <person name="Schueller C."/>
            <person name="Wambutt R."/>
            <person name="Murphy G."/>
            <person name="Volckaert G."/>
            <person name="Pohl T."/>
            <person name="Duesterhoeft A."/>
            <person name="Stiekema W."/>
            <person name="Entian K.-D."/>
            <person name="Terryn N."/>
            <person name="Harris B."/>
            <person name="Ansorge W."/>
            <person name="Brandt P."/>
            <person name="Grivell L.A."/>
            <person name="Rieger M."/>
            <person name="Weichselgartner M."/>
            <person name="de Simone V."/>
            <person name="Obermaier B."/>
            <person name="Mache R."/>
            <person name="Mueller M."/>
            <person name="Kreis M."/>
            <person name="Delseny M."/>
            <person name="Puigdomenech P."/>
            <person name="Watson M."/>
            <person name="Schmidtheini T."/>
            <person name="Reichert B."/>
            <person name="Portetelle D."/>
            <person name="Perez-Alonso M."/>
            <person name="Boutry M."/>
            <person name="Bancroft I."/>
            <person name="Vos P."/>
            <person name="Hoheisel J."/>
            <person name="Zimmermann W."/>
            <person name="Wedler H."/>
            <person name="Ridley P."/>
            <person name="Langham S.-A."/>
            <person name="McCullagh B."/>
            <person name="Bilham L."/>
            <person name="Robben J."/>
            <person name="van der Schueren J."/>
            <person name="Grymonprez B."/>
            <person name="Chuang Y.-J."/>
            <person name="Vandenbussche F."/>
            <person name="Braeken M."/>
            <person name="Weltjens I."/>
            <person name="Voet M."/>
            <person name="Bastiaens I."/>
            <person name="Aert R."/>
            <person name="Defoor E."/>
            <person name="Weitzenegger T."/>
            <person name="Bothe G."/>
            <person name="Ramsperger U."/>
            <person name="Hilbert H."/>
            <person name="Braun M."/>
            <person name="Holzer E."/>
            <person name="Brandt A."/>
            <person name="Peters S."/>
            <person name="van Staveren M."/>
            <person name="Dirkse W."/>
            <person name="Mooijman P."/>
            <person name="Klein Lankhorst R."/>
            <person name="Rose M."/>
            <person name="Hauf J."/>
            <person name="Koetter P."/>
            <person name="Berneiser S."/>
            <person name="Hempel S."/>
            <person name="Feldpausch M."/>
            <person name="Lamberth S."/>
            <person name="Van den Daele H."/>
            <person name="De Keyser A."/>
            <person name="Buysshaert C."/>
            <person name="Gielen J."/>
            <person name="Villarroel R."/>
            <person name="De Clercq R."/>
            <person name="van Montagu M."/>
            <person name="Rogers J."/>
            <person name="Cronin A."/>
            <person name="Quail M.A."/>
            <person name="Bray-Allen S."/>
            <person name="Clark L."/>
            <person name="Doggett J."/>
            <person name="Hall S."/>
            <person name="Kay M."/>
            <person name="Lennard N."/>
            <person name="McLay K."/>
            <person name="Mayes R."/>
            <person name="Pettett A."/>
            <person name="Rajandream M.A."/>
            <person name="Lyne M."/>
            <person name="Benes V."/>
            <person name="Rechmann S."/>
            <person name="Borkova D."/>
            <person name="Bloecker H."/>
            <person name="Scharfe M."/>
            <person name="Grimm M."/>
            <person name="Loehnert T.-H."/>
            <person name="Dose S."/>
            <person name="de Haan M."/>
            <person name="Maarse A.C."/>
            <person name="Schaefer M."/>
            <person name="Mueller-Auer S."/>
            <person name="Gabel C."/>
            <person name="Fuchs M."/>
            <person name="Fartmann B."/>
            <person name="Granderath K."/>
            <person name="Dauner D."/>
            <person name="Herzl A."/>
            <person name="Neumann S."/>
            <person name="Argiriou A."/>
            <person name="Vitale D."/>
            <person name="Liguori R."/>
            <person name="Piravandi E."/>
            <person name="Massenet O."/>
            <person name="Quigley F."/>
            <person name="Clabauld G."/>
            <person name="Muendlein A."/>
            <person name="Felber R."/>
            <person name="Schnabl S."/>
            <person name="Hiller R."/>
            <person name="Schmidt W."/>
            <person name="Lecharny A."/>
            <person name="Aubourg S."/>
            <person name="Chefdor F."/>
            <person name="Cooke R."/>
            <person name="Berger C."/>
            <person name="Monfort A."/>
            <person name="Casacuberta E."/>
            <person name="Gibbons T."/>
            <person name="Weber N."/>
            <person name="Vandenbol M."/>
            <person name="Bargues M."/>
            <person name="Terol J."/>
            <person name="Torres A."/>
            <person name="Perez-Perez A."/>
            <person name="Purnelle B."/>
            <person name="Bent E."/>
            <person name="Johnson S."/>
            <person name="Tacon D."/>
            <person name="Jesse T."/>
            <person name="Heijnen L."/>
            <person name="Schwarz S."/>
            <person name="Scholler P."/>
            <person name="Heber S."/>
            <person name="Francs P."/>
            <person name="Bielke C."/>
            <person name="Frishman D."/>
            <person name="Haase D."/>
            <person name="Lemcke K."/>
            <person name="Mewes H.-W."/>
            <person name="Stocker S."/>
            <person name="Zaccaria P."/>
            <person name="Bevan M."/>
            <person name="Wilson R.K."/>
            <person name="de la Bastide M."/>
            <person name="Habermann K."/>
            <person name="Parnell L."/>
            <person name="Dedhia N."/>
            <person name="Gnoj L."/>
            <person name="Schutz K."/>
            <person name="Huang E."/>
            <person name="Spiegel L."/>
            <person name="Sekhon M."/>
            <person name="Murray J."/>
            <person name="Sheet P."/>
            <person name="Cordes M."/>
            <person name="Abu-Threideh J."/>
            <person name="Stoneking T."/>
            <person name="Kalicki J."/>
            <person name="Graves T."/>
            <person name="Harmon G."/>
            <person name="Edwards J."/>
            <person name="Latreille P."/>
            <person name="Courtney L."/>
            <person name="Cloud J."/>
            <person name="Abbott A."/>
            <person name="Scott K."/>
            <person name="Johnson D."/>
            <person name="Minx P."/>
            <person name="Bentley D."/>
            <person name="Fulton B."/>
            <person name="Miller N."/>
            <person name="Greco T."/>
            <person name="Kemp K."/>
            <person name="Kramer J."/>
            <person name="Fulton L."/>
            <person name="Mardis E."/>
            <person name="Dante M."/>
            <person name="Pepin K."/>
            <person name="Hillier L.W."/>
            <person name="Nelson J."/>
            <person name="Spieth J."/>
            <person name="Ryan E."/>
            <person name="Andrews S."/>
            <person name="Geisel C."/>
            <person name="Layman D."/>
            <person name="Du H."/>
            <person name="Ali J."/>
            <person name="Berghoff A."/>
            <person name="Jones K."/>
            <person name="Drone K."/>
            <person name="Cotton M."/>
            <person name="Joshu C."/>
            <person name="Antonoiu B."/>
            <person name="Zidanic M."/>
            <person name="Strong C."/>
            <person name="Sun H."/>
            <person name="Lamar B."/>
            <person name="Yordan C."/>
            <person name="Ma P."/>
            <person name="Zhong J."/>
            <person name="Preston R."/>
            <person name="Vil D."/>
            <person name="Shekher M."/>
            <person name="Matero A."/>
            <person name="Shah R."/>
            <person name="Swaby I.K."/>
            <person name="O'Shaughnessy A."/>
            <person name="Rodriguez M."/>
            <person name="Hoffman J."/>
            <person name="Till S."/>
            <person name="Granat S."/>
            <person name="Shohdy N."/>
            <person name="Hasegawa A."/>
            <person name="Hameed A."/>
            <person name="Lodhi M."/>
            <person name="Johnson A."/>
            <person name="Chen E."/>
            <person name="Marra M.A."/>
            <person name="Martienssen R."/>
            <person name="McCombie W.R."/>
        </authorList>
    </citation>
    <scope>NUCLEOTIDE SEQUENCE [LARGE SCALE GENOMIC DNA]</scope>
    <source>
        <strain>cv. Columbia</strain>
    </source>
</reference>
<reference key="3">
    <citation type="journal article" date="2017" name="Plant J.">
        <title>Araport11: a complete reannotation of the Arabidopsis thaliana reference genome.</title>
        <authorList>
            <person name="Cheng C.Y."/>
            <person name="Krishnakumar V."/>
            <person name="Chan A.P."/>
            <person name="Thibaud-Nissen F."/>
            <person name="Schobel S."/>
            <person name="Town C.D."/>
        </authorList>
    </citation>
    <scope>GENOME REANNOTATION</scope>
    <source>
        <strain>cv. Columbia</strain>
    </source>
</reference>
<reference key="4">
    <citation type="submission" date="2006-07" db="EMBL/GenBank/DDBJ databases">
        <title>Arabidopsis ORF clones.</title>
        <authorList>
            <person name="Kim C.J."/>
            <person name="Chen H."/>
            <person name="Quinitio C."/>
            <person name="Shinn P."/>
            <person name="Ecker J.R."/>
        </authorList>
    </citation>
    <scope>NUCLEOTIDE SEQUENCE [LARGE SCALE MRNA]</scope>
    <source>
        <strain>cv. Columbia</strain>
    </source>
</reference>
<reference key="5">
    <citation type="journal article" date="2008" name="BMC Genomics">
        <title>Genome-wide analysis of CCCH zinc finger family in Arabidopsis and rice.</title>
        <authorList>
            <person name="Wang D."/>
            <person name="Guo Y."/>
            <person name="Wu C."/>
            <person name="Yang G."/>
            <person name="Li Y."/>
            <person name="Zheng C."/>
        </authorList>
    </citation>
    <scope>NOMENCLATURE</scope>
</reference>
<evidence type="ECO:0000255" key="1">
    <source>
        <dbReference type="PROSITE-ProRule" id="PRU00723"/>
    </source>
</evidence>
<evidence type="ECO:0000256" key="2">
    <source>
        <dbReference type="SAM" id="MobiDB-lite"/>
    </source>
</evidence>